<keyword id="KW-0963">Cytoplasm</keyword>
<keyword id="KW-0808">Transferase</keyword>
<organism>
    <name type="scientific">Salmonella agona (strain SL483)</name>
    <dbReference type="NCBI Taxonomy" id="454166"/>
    <lineage>
        <taxon>Bacteria</taxon>
        <taxon>Pseudomonadati</taxon>
        <taxon>Pseudomonadota</taxon>
        <taxon>Gammaproteobacteria</taxon>
        <taxon>Enterobacterales</taxon>
        <taxon>Enterobacteriaceae</taxon>
        <taxon>Salmonella</taxon>
    </lineage>
</organism>
<feature type="chain" id="PRO_1000190104" description="Thiosulfate sulfurtransferase GlpE">
    <location>
        <begin position="1"/>
        <end position="108"/>
    </location>
</feature>
<feature type="domain" description="Rhodanese" evidence="1">
    <location>
        <begin position="17"/>
        <end position="105"/>
    </location>
</feature>
<feature type="active site" description="Cysteine persulfide intermediate" evidence="1">
    <location>
        <position position="65"/>
    </location>
</feature>
<reference key="1">
    <citation type="journal article" date="2011" name="J. Bacteriol.">
        <title>Comparative genomics of 28 Salmonella enterica isolates: evidence for CRISPR-mediated adaptive sublineage evolution.</title>
        <authorList>
            <person name="Fricke W.F."/>
            <person name="Mammel M.K."/>
            <person name="McDermott P.F."/>
            <person name="Tartera C."/>
            <person name="White D.G."/>
            <person name="Leclerc J.E."/>
            <person name="Ravel J."/>
            <person name="Cebula T.A."/>
        </authorList>
    </citation>
    <scope>NUCLEOTIDE SEQUENCE [LARGE SCALE GENOMIC DNA]</scope>
    <source>
        <strain>SL483</strain>
    </source>
</reference>
<gene>
    <name evidence="1" type="primary">glpE</name>
    <name type="ordered locus">SeAg_B3726</name>
</gene>
<protein>
    <recommendedName>
        <fullName evidence="1">Thiosulfate sulfurtransferase GlpE</fullName>
        <ecNumber evidence="1">2.8.1.1</ecNumber>
    </recommendedName>
</protein>
<name>GLPE_SALA4</name>
<comment type="function">
    <text evidence="1">Transferase that catalyzes the transfer of sulfur from thiosulfate to thiophilic acceptors such as cyanide or dithiols. May function in a CysM-independent thiosulfate assimilation pathway by catalyzing the conversion of thiosulfate to sulfite, which can then be used for L-cysteine biosynthesis.</text>
</comment>
<comment type="catalytic activity">
    <reaction evidence="1">
        <text>thiosulfate + hydrogen cyanide = thiocyanate + sulfite + 2 H(+)</text>
        <dbReference type="Rhea" id="RHEA:16881"/>
        <dbReference type="ChEBI" id="CHEBI:15378"/>
        <dbReference type="ChEBI" id="CHEBI:17359"/>
        <dbReference type="ChEBI" id="CHEBI:18022"/>
        <dbReference type="ChEBI" id="CHEBI:18407"/>
        <dbReference type="ChEBI" id="CHEBI:33542"/>
        <dbReference type="EC" id="2.8.1.1"/>
    </reaction>
</comment>
<comment type="catalytic activity">
    <reaction evidence="1">
        <text>thiosulfate + [thioredoxin]-dithiol = [thioredoxin]-disulfide + hydrogen sulfide + sulfite + 2 H(+)</text>
        <dbReference type="Rhea" id="RHEA:83859"/>
        <dbReference type="Rhea" id="RHEA-COMP:10698"/>
        <dbReference type="Rhea" id="RHEA-COMP:10700"/>
        <dbReference type="ChEBI" id="CHEBI:15378"/>
        <dbReference type="ChEBI" id="CHEBI:17359"/>
        <dbReference type="ChEBI" id="CHEBI:29919"/>
        <dbReference type="ChEBI" id="CHEBI:29950"/>
        <dbReference type="ChEBI" id="CHEBI:33542"/>
        <dbReference type="ChEBI" id="CHEBI:50058"/>
    </reaction>
</comment>
<comment type="subcellular location">
    <subcellularLocation>
        <location evidence="1">Cytoplasm</location>
    </subcellularLocation>
</comment>
<comment type="similarity">
    <text evidence="1">Belongs to the GlpE family.</text>
</comment>
<accession>B5F8P1</accession>
<sequence length="108" mass="11990">MEQFECITVEEAYQKLRQGAAVLVDIRDPQSYAMGHAPQAFHLTNDTLGAFMRKHGFDTAVMVMCYHGNSSKGAAQYLLQQGYDAVYSIDGGFEAWHRRFPANVANGA</sequence>
<evidence type="ECO:0000255" key="1">
    <source>
        <dbReference type="HAMAP-Rule" id="MF_01009"/>
    </source>
</evidence>
<dbReference type="EC" id="2.8.1.1" evidence="1"/>
<dbReference type="EMBL" id="CP001138">
    <property type="protein sequence ID" value="ACH48629.1"/>
    <property type="molecule type" value="Genomic_DNA"/>
</dbReference>
<dbReference type="RefSeq" id="WP_000434528.1">
    <property type="nucleotide sequence ID" value="NC_011149.1"/>
</dbReference>
<dbReference type="SMR" id="B5F8P1"/>
<dbReference type="KEGG" id="sea:SeAg_B3726"/>
<dbReference type="HOGENOM" id="CLU_089574_14_0_6"/>
<dbReference type="Proteomes" id="UP000008819">
    <property type="component" value="Chromosome"/>
</dbReference>
<dbReference type="GO" id="GO:0005737">
    <property type="term" value="C:cytoplasm"/>
    <property type="evidence" value="ECO:0007669"/>
    <property type="project" value="UniProtKB-SubCell"/>
</dbReference>
<dbReference type="GO" id="GO:0004792">
    <property type="term" value="F:thiosulfate-cyanide sulfurtransferase activity"/>
    <property type="evidence" value="ECO:0007669"/>
    <property type="project" value="UniProtKB-UniRule"/>
</dbReference>
<dbReference type="GO" id="GO:0006071">
    <property type="term" value="P:glycerol metabolic process"/>
    <property type="evidence" value="ECO:0007669"/>
    <property type="project" value="UniProtKB-UniRule"/>
</dbReference>
<dbReference type="CDD" id="cd01444">
    <property type="entry name" value="GlpE_ST"/>
    <property type="match status" value="1"/>
</dbReference>
<dbReference type="FunFam" id="3.40.250.10:FF:000007">
    <property type="entry name" value="Thiosulfate sulfurtransferase GlpE"/>
    <property type="match status" value="1"/>
</dbReference>
<dbReference type="Gene3D" id="3.40.250.10">
    <property type="entry name" value="Rhodanese-like domain"/>
    <property type="match status" value="1"/>
</dbReference>
<dbReference type="HAMAP" id="MF_01009">
    <property type="entry name" value="Thiosulf_sulfurtr"/>
    <property type="match status" value="1"/>
</dbReference>
<dbReference type="InterPro" id="IPR050229">
    <property type="entry name" value="GlpE_sulfurtransferase"/>
</dbReference>
<dbReference type="InterPro" id="IPR001763">
    <property type="entry name" value="Rhodanese-like_dom"/>
</dbReference>
<dbReference type="InterPro" id="IPR036873">
    <property type="entry name" value="Rhodanese-like_dom_sf"/>
</dbReference>
<dbReference type="InterPro" id="IPR023695">
    <property type="entry name" value="Thiosulf_sulfurTrfase"/>
</dbReference>
<dbReference type="NCBIfam" id="NF001195">
    <property type="entry name" value="PRK00162.1"/>
    <property type="match status" value="1"/>
</dbReference>
<dbReference type="PANTHER" id="PTHR43031">
    <property type="entry name" value="FAD-DEPENDENT OXIDOREDUCTASE"/>
    <property type="match status" value="1"/>
</dbReference>
<dbReference type="PANTHER" id="PTHR43031:SF6">
    <property type="entry name" value="THIOSULFATE SULFURTRANSFERASE GLPE"/>
    <property type="match status" value="1"/>
</dbReference>
<dbReference type="Pfam" id="PF00581">
    <property type="entry name" value="Rhodanese"/>
    <property type="match status" value="1"/>
</dbReference>
<dbReference type="SMART" id="SM00450">
    <property type="entry name" value="RHOD"/>
    <property type="match status" value="1"/>
</dbReference>
<dbReference type="SUPFAM" id="SSF52821">
    <property type="entry name" value="Rhodanese/Cell cycle control phosphatase"/>
    <property type="match status" value="1"/>
</dbReference>
<dbReference type="PROSITE" id="PS50206">
    <property type="entry name" value="RHODANESE_3"/>
    <property type="match status" value="1"/>
</dbReference>
<proteinExistence type="inferred from homology"/>